<protein>
    <recommendedName>
        <fullName>Origin recognition complex subunit 1</fullName>
    </recommendedName>
</protein>
<organism>
    <name type="scientific">Rattus norvegicus</name>
    <name type="common">Rat</name>
    <dbReference type="NCBI Taxonomy" id="10116"/>
    <lineage>
        <taxon>Eukaryota</taxon>
        <taxon>Metazoa</taxon>
        <taxon>Chordata</taxon>
        <taxon>Craniata</taxon>
        <taxon>Vertebrata</taxon>
        <taxon>Euteleostomi</taxon>
        <taxon>Mammalia</taxon>
        <taxon>Eutheria</taxon>
        <taxon>Euarchontoglires</taxon>
        <taxon>Glires</taxon>
        <taxon>Rodentia</taxon>
        <taxon>Myomorpha</taxon>
        <taxon>Muroidea</taxon>
        <taxon>Muridae</taxon>
        <taxon>Murinae</taxon>
        <taxon>Rattus</taxon>
    </lineage>
</organism>
<evidence type="ECO:0000250" key="1"/>
<evidence type="ECO:0000250" key="2">
    <source>
        <dbReference type="UniProtKB" id="Q13415"/>
    </source>
</evidence>
<evidence type="ECO:0000250" key="3">
    <source>
        <dbReference type="UniProtKB" id="Q9Z1N2"/>
    </source>
</evidence>
<evidence type="ECO:0000255" key="4">
    <source>
        <dbReference type="PROSITE-ProRule" id="PRU00370"/>
    </source>
</evidence>
<evidence type="ECO:0000256" key="5">
    <source>
        <dbReference type="SAM" id="MobiDB-lite"/>
    </source>
</evidence>
<evidence type="ECO:0000305" key="6"/>
<keyword id="KW-0007">Acetylation</keyword>
<keyword id="KW-0067">ATP-binding</keyword>
<keyword id="KW-0235">DNA replication</keyword>
<keyword id="KW-0238">DNA-binding</keyword>
<keyword id="KW-0460">Magnesium</keyword>
<keyword id="KW-0479">Metal-binding</keyword>
<keyword id="KW-0547">Nucleotide-binding</keyword>
<keyword id="KW-0539">Nucleus</keyword>
<keyword id="KW-0597">Phosphoprotein</keyword>
<keyword id="KW-1185">Reference proteome</keyword>
<name>ORC1_RAT</name>
<dbReference type="EMBL" id="AB105378">
    <property type="protein sequence ID" value="BAC65338.1"/>
    <property type="molecule type" value="mRNA"/>
</dbReference>
<dbReference type="RefSeq" id="NP_808792.1">
    <property type="nucleotide sequence ID" value="NM_177931.2"/>
</dbReference>
<dbReference type="SMR" id="Q80Z32"/>
<dbReference type="FunCoup" id="Q80Z32">
    <property type="interactions" value="369"/>
</dbReference>
<dbReference type="STRING" id="10116.ENSRNOP00000012492"/>
<dbReference type="GlyGen" id="Q80Z32">
    <property type="glycosylation" value="1 site"/>
</dbReference>
<dbReference type="iPTMnet" id="Q80Z32"/>
<dbReference type="PhosphoSitePlus" id="Q80Z32"/>
<dbReference type="PaxDb" id="10116-ENSRNOP00000012492"/>
<dbReference type="GeneID" id="313479"/>
<dbReference type="KEGG" id="rno:313479"/>
<dbReference type="UCSC" id="RGD:631435">
    <property type="organism name" value="rat"/>
</dbReference>
<dbReference type="AGR" id="RGD:631435"/>
<dbReference type="CTD" id="4998"/>
<dbReference type="RGD" id="631435">
    <property type="gene designation" value="Orc1"/>
</dbReference>
<dbReference type="eggNOG" id="KOG1514">
    <property type="taxonomic scope" value="Eukaryota"/>
</dbReference>
<dbReference type="InParanoid" id="Q80Z32"/>
<dbReference type="OrthoDB" id="1926878at2759"/>
<dbReference type="PhylomeDB" id="Q80Z32"/>
<dbReference type="Reactome" id="R-RNO-176187">
    <property type="pathway name" value="Activation of ATR in response to replication stress"/>
</dbReference>
<dbReference type="Reactome" id="R-RNO-68616">
    <property type="pathway name" value="Assembly of the ORC complex at the origin of replication"/>
</dbReference>
<dbReference type="Reactome" id="R-RNO-68689">
    <property type="pathway name" value="CDC6 association with the ORC:origin complex"/>
</dbReference>
<dbReference type="Reactome" id="R-RNO-68949">
    <property type="pathway name" value="Orc1 removal from chromatin"/>
</dbReference>
<dbReference type="Reactome" id="R-RNO-68962">
    <property type="pathway name" value="Activation of the pre-replicative complex"/>
</dbReference>
<dbReference type="PRO" id="PR:Q80Z32"/>
<dbReference type="Proteomes" id="UP000002494">
    <property type="component" value="Unplaced"/>
</dbReference>
<dbReference type="GO" id="GO:0000781">
    <property type="term" value="C:chromosome, telomeric region"/>
    <property type="evidence" value="ECO:0000266"/>
    <property type="project" value="RGD"/>
</dbReference>
<dbReference type="GO" id="GO:0005664">
    <property type="term" value="C:nuclear origin of replication recognition complex"/>
    <property type="evidence" value="ECO:0000250"/>
    <property type="project" value="UniProtKB"/>
</dbReference>
<dbReference type="GO" id="GO:0000808">
    <property type="term" value="C:origin recognition complex"/>
    <property type="evidence" value="ECO:0000266"/>
    <property type="project" value="RGD"/>
</dbReference>
<dbReference type="GO" id="GO:0005524">
    <property type="term" value="F:ATP binding"/>
    <property type="evidence" value="ECO:0007669"/>
    <property type="project" value="UniProtKB-KW"/>
</dbReference>
<dbReference type="GO" id="GO:0016887">
    <property type="term" value="F:ATP hydrolysis activity"/>
    <property type="evidence" value="ECO:0007669"/>
    <property type="project" value="InterPro"/>
</dbReference>
<dbReference type="GO" id="GO:0003682">
    <property type="term" value="F:chromatin binding"/>
    <property type="evidence" value="ECO:0000314"/>
    <property type="project" value="RGD"/>
</dbReference>
<dbReference type="GO" id="GO:0003688">
    <property type="term" value="F:DNA replication origin binding"/>
    <property type="evidence" value="ECO:0000318"/>
    <property type="project" value="GO_Central"/>
</dbReference>
<dbReference type="GO" id="GO:0046872">
    <property type="term" value="F:metal ion binding"/>
    <property type="evidence" value="ECO:0007669"/>
    <property type="project" value="UniProtKB-KW"/>
</dbReference>
<dbReference type="GO" id="GO:0006270">
    <property type="term" value="P:DNA replication initiation"/>
    <property type="evidence" value="ECO:0000266"/>
    <property type="project" value="RGD"/>
</dbReference>
<dbReference type="GO" id="GO:0033314">
    <property type="term" value="P:mitotic DNA replication checkpoint signaling"/>
    <property type="evidence" value="ECO:0000318"/>
    <property type="project" value="GO_Central"/>
</dbReference>
<dbReference type="GO" id="GO:0070318">
    <property type="term" value="P:positive regulation of G0 to G1 transition"/>
    <property type="evidence" value="ECO:0000315"/>
    <property type="project" value="RGD"/>
</dbReference>
<dbReference type="GO" id="GO:0048661">
    <property type="term" value="P:positive regulation of smooth muscle cell proliferation"/>
    <property type="evidence" value="ECO:0000315"/>
    <property type="project" value="RGD"/>
</dbReference>
<dbReference type="CDD" id="cd04719">
    <property type="entry name" value="BAH_Orc1p_animal"/>
    <property type="match status" value="1"/>
</dbReference>
<dbReference type="CDD" id="cd08768">
    <property type="entry name" value="Cdc6_C"/>
    <property type="match status" value="1"/>
</dbReference>
<dbReference type="FunFam" id="1.10.8.60:FF:000062">
    <property type="entry name" value="Origin recognition complex subunit 1"/>
    <property type="match status" value="1"/>
</dbReference>
<dbReference type="FunFam" id="2.30.30.490:FF:000010">
    <property type="entry name" value="Origin recognition complex subunit 1"/>
    <property type="match status" value="1"/>
</dbReference>
<dbReference type="FunFam" id="3.40.50.300:FF:000199">
    <property type="entry name" value="Origin recognition complex subunit 1"/>
    <property type="match status" value="1"/>
</dbReference>
<dbReference type="Gene3D" id="2.30.30.490">
    <property type="match status" value="1"/>
</dbReference>
<dbReference type="Gene3D" id="3.40.50.300">
    <property type="entry name" value="P-loop containing nucleotide triphosphate hydrolases"/>
    <property type="match status" value="1"/>
</dbReference>
<dbReference type="InterPro" id="IPR003593">
    <property type="entry name" value="AAA+_ATPase"/>
</dbReference>
<dbReference type="InterPro" id="IPR041083">
    <property type="entry name" value="AAA_lid_10"/>
</dbReference>
<dbReference type="InterPro" id="IPR003959">
    <property type="entry name" value="ATPase_AAA_core"/>
</dbReference>
<dbReference type="InterPro" id="IPR001025">
    <property type="entry name" value="BAH_dom"/>
</dbReference>
<dbReference type="InterPro" id="IPR043151">
    <property type="entry name" value="BAH_sf"/>
</dbReference>
<dbReference type="InterPro" id="IPR015163">
    <property type="entry name" value="Cdc6_C"/>
</dbReference>
<dbReference type="InterPro" id="IPR050311">
    <property type="entry name" value="ORC1/CDC6"/>
</dbReference>
<dbReference type="InterPro" id="IPR027417">
    <property type="entry name" value="P-loop_NTPase"/>
</dbReference>
<dbReference type="PANTHER" id="PTHR10763">
    <property type="entry name" value="CELL DIVISION CONTROL PROTEIN 6-RELATED"/>
    <property type="match status" value="1"/>
</dbReference>
<dbReference type="PANTHER" id="PTHR10763:SF23">
    <property type="entry name" value="ORIGIN RECOGNITION COMPLEX SUBUNIT 1"/>
    <property type="match status" value="1"/>
</dbReference>
<dbReference type="Pfam" id="PF00004">
    <property type="entry name" value="AAA"/>
    <property type="match status" value="1"/>
</dbReference>
<dbReference type="Pfam" id="PF17872">
    <property type="entry name" value="AAA_lid_10"/>
    <property type="match status" value="1"/>
</dbReference>
<dbReference type="Pfam" id="PF01426">
    <property type="entry name" value="BAH"/>
    <property type="match status" value="1"/>
</dbReference>
<dbReference type="Pfam" id="PF09079">
    <property type="entry name" value="Cdc6_C"/>
    <property type="match status" value="1"/>
</dbReference>
<dbReference type="SMART" id="SM00382">
    <property type="entry name" value="AAA"/>
    <property type="match status" value="1"/>
</dbReference>
<dbReference type="SMART" id="SM00439">
    <property type="entry name" value="BAH"/>
    <property type="match status" value="1"/>
</dbReference>
<dbReference type="SMART" id="SM01074">
    <property type="entry name" value="Cdc6_C"/>
    <property type="match status" value="1"/>
</dbReference>
<dbReference type="SUPFAM" id="SSF52540">
    <property type="entry name" value="P-loop containing nucleoside triphosphate hydrolases"/>
    <property type="match status" value="1"/>
</dbReference>
<dbReference type="PROSITE" id="PS51038">
    <property type="entry name" value="BAH"/>
    <property type="match status" value="1"/>
</dbReference>
<accession>Q80Z32</accession>
<proteinExistence type="evidence at transcript level"/>
<reference key="1">
    <citation type="submission" date="2003-03" db="EMBL/GenBank/DDBJ databases">
        <title>Rat origin recognition complex, subunit 1.</title>
        <authorList>
            <person name="Saitoh Y."/>
            <person name="Ushio K."/>
            <person name="Tsutsumi K."/>
        </authorList>
    </citation>
    <scope>NUCLEOTIDE SEQUENCE [MRNA]</scope>
</reference>
<sequence length="848" mass="95760">MPSYVTRQKTRQTFSWVGRPLPNRKQFYQMYKEICMKINGCSEIHIKVGQFVLIQGEDNQKPYVAKLIELFENGSEVPPKKYARVQWFVRFCEIPIPKRHLLGRRPSAQEIFWYDCSDCDNDIHVETIIGPVQVVALAPEDEIPVNQKSEETLFVKLSWNKKNFAPLPPEELAALRRLECQKPLEAKTKSVKSPSWSTAEQEVKRIESSHSTSRSYQDPAHTVTPNAMKSLECGGFTRKPNMRLSRKILCDSLDSQKTCKRRAAFSETTSPPKKPQPGEIKTSSALETLGKNGHTQPFFAKSSMVLRTRGTAVKTTKLTVESALSPVRSRSRYSVAPSVGLTPQYIGRKAKEQETHKEPIHTSLRARRRSSLLTLKRIKQQLWLLDDDKSDQEEEESISSVEVSDSSSEEEDESVPSPPTGKPVGQSRTRRTASKPSSQTPSKSPKKTFRPRPPLHATPQIRDRNLAVQEPASVLEEARLRLHVSAVPDSLPCREQEFQDIYSFVESKLLDGTGGCMYISGVPGTGKTATVHEVIRCLQQAAQTNDVPPFEYVEVNGMKLTEPHQVYVQILQKLTGQKATANHAAELLAKQFCSRGSQKETTVLLVDELDLLWTHKQDVLYNLFDWPTHKGARLVVLTIANTMDLPERIMMNRVASRLGLTRMSFQPYSHSQLKQILVSRLKHLKAFEDDAVQLVARKVAALSGDARRCLDICRRATEICEVSHQRGDSQCLVTVAHLMEAIDEMFSSSYITAIKNSSVLEQSFLRAIIAEFRRSGLEEATFQQIYSQHVALCRMEGLPYPTMSETMAVCSRLGSCRILLVEPSRNDLLLRVRLNVSQNDVLYALKEE</sequence>
<comment type="function">
    <text evidence="1">Component of the origin recognition complex (ORC) that binds origins of replication. DNA-binding is ATP-dependent. The specific DNA sequences that define origins of replication have not been identified yet. ORC is required to assemble the pre-replication complex necessary to initiate DNA replication (By similarity).</text>
</comment>
<comment type="subunit">
    <text evidence="1">Component of ORC, a complex composed of at least 6 subunits: ORC1, ORC2, ORC3, ORC4, ORC5 and ORC6. ORC is regulated in a cell-cycle dependent manner. It is sequentially assembled at the exit from anaphase of mitosis and disassembled as cells enter S phase (By similarity). Interacts with CDC6 and KAT7/HBO1 (By similarity). Interacts with LRWD1 predominantly during the G1 phase and with less affinity during mitosis, when phosphorylated (By similarity).</text>
</comment>
<comment type="subcellular location">
    <subcellularLocation>
        <location evidence="1">Nucleus</location>
    </subcellularLocation>
</comment>
<comment type="domain">
    <text evidence="1">The BAH domain mediates binding to dimethylated histone H4 'Lys-20' (H4K20me2), which is enriched at replication origins.</text>
</comment>
<comment type="PTM">
    <text evidence="1">Phosphorylated during mitosis.</text>
</comment>
<comment type="similarity">
    <text evidence="6">Belongs to the ORC1 family.</text>
</comment>
<gene>
    <name type="primary">Orc1</name>
    <name type="synonym">Orc1l</name>
</gene>
<feature type="chain" id="PRO_0000330357" description="Origin recognition complex subunit 1">
    <location>
        <begin position="1"/>
        <end position="848"/>
    </location>
</feature>
<feature type="domain" description="BAH" evidence="4">
    <location>
        <begin position="44"/>
        <end position="170"/>
    </location>
</feature>
<feature type="region of interest" description="Disordered" evidence="5">
    <location>
        <begin position="189"/>
        <end position="227"/>
    </location>
</feature>
<feature type="region of interest" description="Disordered" evidence="5">
    <location>
        <begin position="261"/>
        <end position="280"/>
    </location>
</feature>
<feature type="region of interest" description="Disordered" evidence="5">
    <location>
        <begin position="344"/>
        <end position="365"/>
    </location>
</feature>
<feature type="region of interest" description="Disordered" evidence="5">
    <location>
        <begin position="388"/>
        <end position="466"/>
    </location>
</feature>
<feature type="region of interest" description="Necessary and sufficient for ORC complex assembly" evidence="1">
    <location>
        <begin position="488"/>
        <end position="848"/>
    </location>
</feature>
<feature type="compositionally biased region" description="Polar residues" evidence="5">
    <location>
        <begin position="191"/>
        <end position="200"/>
    </location>
</feature>
<feature type="compositionally biased region" description="Basic and acidic residues" evidence="5">
    <location>
        <begin position="349"/>
        <end position="360"/>
    </location>
</feature>
<feature type="compositionally biased region" description="Acidic residues" evidence="5">
    <location>
        <begin position="388"/>
        <end position="397"/>
    </location>
</feature>
<feature type="compositionally biased region" description="Low complexity" evidence="5">
    <location>
        <begin position="434"/>
        <end position="443"/>
    </location>
</feature>
<feature type="binding site" evidence="2">
    <location>
        <position position="487"/>
    </location>
    <ligand>
        <name>ATP</name>
        <dbReference type="ChEBI" id="CHEBI:30616"/>
    </ligand>
</feature>
<feature type="binding site" evidence="2">
    <location>
        <begin position="521"/>
        <end position="529"/>
    </location>
    <ligand>
        <name>ATP</name>
        <dbReference type="ChEBI" id="CHEBI:30616"/>
    </ligand>
</feature>
<feature type="binding site" evidence="2">
    <location>
        <position position="607"/>
    </location>
    <ligand>
        <name>Mg(2+)</name>
        <dbReference type="ChEBI" id="CHEBI:18420"/>
    </ligand>
</feature>
<feature type="binding site" evidence="2">
    <location>
        <position position="608"/>
    </location>
    <ligand>
        <name>ATP</name>
        <dbReference type="ChEBI" id="CHEBI:30616"/>
    </ligand>
</feature>
<feature type="binding site" evidence="2">
    <location>
        <position position="608"/>
    </location>
    <ligand>
        <name>Mg(2+)</name>
        <dbReference type="ChEBI" id="CHEBI:18420"/>
    </ligand>
</feature>
<feature type="binding site" evidence="2">
    <location>
        <position position="641"/>
    </location>
    <ligand>
        <name>ATP</name>
        <dbReference type="ChEBI" id="CHEBI:30616"/>
    </ligand>
</feature>
<feature type="binding site" evidence="2">
    <location>
        <position position="707"/>
    </location>
    <ligand>
        <name>ATP</name>
        <dbReference type="ChEBI" id="CHEBI:30616"/>
    </ligand>
</feature>
<feature type="site" description="Histone H4K20me2 binding" evidence="3">
    <location>
        <position position="93"/>
    </location>
</feature>
<feature type="modified residue" description="Phosphoserine" evidence="2">
    <location>
        <position position="193"/>
    </location>
</feature>
<feature type="modified residue" description="Phosphoserine" evidence="3">
    <location>
        <position position="252"/>
    </location>
</feature>
<feature type="modified residue" description="Phosphoserine" evidence="2">
    <location>
        <position position="270"/>
    </location>
</feature>
<feature type="modified residue" description="Phosphoserine" evidence="2">
    <location>
        <position position="284"/>
    </location>
</feature>
<feature type="modified residue" description="N6-acetyllysine" evidence="2">
    <location>
        <position position="314"/>
    </location>
</feature>
<feature type="modified residue" description="Phosphoserine" evidence="3">
    <location>
        <position position="325"/>
    </location>
</feature>
<feature type="modified residue" description="Phosphoserine" evidence="2">
    <location>
        <position position="404"/>
    </location>
</feature>
<feature type="modified residue" description="Phosphoserine" evidence="2">
    <location>
        <position position="407"/>
    </location>
</feature>